<sequence length="432" mass="47281">MRVLVLGSGVVGTASAYYLARAGFEVVVVDRQPAVAMETSFANAGQVSPGYASPWAAPGVPLKAMKWLLQRHAPLAIKLTGDIDQYLWMAQMLRNCTAARYAVNKERMVRLSEYSRDCLDELRAETGIAYEGRQLGTTQLFRTQAQLDAAAKDIAVLERSGVPYELLDRASIARVEPALAKVSHKLSGALRLPNDQTGDCQLFTTRLAEMARALGVEFRFEQNIQRLEHAGDRIAGVWIDGKLETADRYVLALGSYSPQMLKPLGIRAPVYPLKGYSLTVPISDPAMAPQSTVLDETYKVAITRFDQRIRVGGMAEIAGHDLSLDPRRRETLEMVVGDLYPQGGDPSDAVFWTGLRPATPDGTPIIGATPYRNLFLNTGHGTLGWTMACGSGRVLADLLASKRPQISTEGLDIFRYGKHKENHKHAHPAAAH</sequence>
<keyword id="KW-0274">FAD</keyword>
<keyword id="KW-0285">Flavoprotein</keyword>
<keyword id="KW-0560">Oxidoreductase</keyword>
<keyword id="KW-1185">Reference proteome</keyword>
<organism>
    <name type="scientific">Stutzerimonas stutzeri (strain A1501)</name>
    <name type="common">Pseudomonas stutzeri</name>
    <dbReference type="NCBI Taxonomy" id="379731"/>
    <lineage>
        <taxon>Bacteria</taxon>
        <taxon>Pseudomonadati</taxon>
        <taxon>Pseudomonadota</taxon>
        <taxon>Gammaproteobacteria</taxon>
        <taxon>Pseudomonadales</taxon>
        <taxon>Pseudomonadaceae</taxon>
        <taxon>Stutzerimonas</taxon>
    </lineage>
</organism>
<dbReference type="EC" id="1.4.99.-" evidence="1"/>
<dbReference type="EMBL" id="CP000304">
    <property type="protein sequence ID" value="ABP78189.1"/>
    <property type="molecule type" value="Genomic_DNA"/>
</dbReference>
<dbReference type="RefSeq" id="WP_011911717.1">
    <property type="nucleotide sequence ID" value="NC_009434.1"/>
</dbReference>
<dbReference type="SMR" id="A4VGT8"/>
<dbReference type="KEGG" id="psa:PST_0483"/>
<dbReference type="eggNOG" id="COG0665">
    <property type="taxonomic scope" value="Bacteria"/>
</dbReference>
<dbReference type="HOGENOM" id="CLU_007884_9_2_6"/>
<dbReference type="UniPathway" id="UPA00043">
    <property type="reaction ID" value="UER00498"/>
</dbReference>
<dbReference type="Proteomes" id="UP000000233">
    <property type="component" value="Chromosome"/>
</dbReference>
<dbReference type="GO" id="GO:0005737">
    <property type="term" value="C:cytoplasm"/>
    <property type="evidence" value="ECO:0007669"/>
    <property type="project" value="TreeGrafter"/>
</dbReference>
<dbReference type="GO" id="GO:0005886">
    <property type="term" value="C:plasma membrane"/>
    <property type="evidence" value="ECO:0007669"/>
    <property type="project" value="TreeGrafter"/>
</dbReference>
<dbReference type="GO" id="GO:0008718">
    <property type="term" value="F:D-amino-acid dehydrogenase activity"/>
    <property type="evidence" value="ECO:0007669"/>
    <property type="project" value="UniProtKB-UniRule"/>
</dbReference>
<dbReference type="GO" id="GO:0055130">
    <property type="term" value="P:D-alanine catabolic process"/>
    <property type="evidence" value="ECO:0007669"/>
    <property type="project" value="UniProtKB-UniPathway"/>
</dbReference>
<dbReference type="FunFam" id="3.50.50.60:FF:000020">
    <property type="entry name" value="D-amino acid dehydrogenase"/>
    <property type="match status" value="1"/>
</dbReference>
<dbReference type="Gene3D" id="3.30.9.10">
    <property type="entry name" value="D-Amino Acid Oxidase, subunit A, domain 2"/>
    <property type="match status" value="1"/>
</dbReference>
<dbReference type="Gene3D" id="3.50.50.60">
    <property type="entry name" value="FAD/NAD(P)-binding domain"/>
    <property type="match status" value="2"/>
</dbReference>
<dbReference type="HAMAP" id="MF_01202">
    <property type="entry name" value="DadA"/>
    <property type="match status" value="1"/>
</dbReference>
<dbReference type="InterPro" id="IPR023080">
    <property type="entry name" value="DadA"/>
</dbReference>
<dbReference type="InterPro" id="IPR006076">
    <property type="entry name" value="FAD-dep_OxRdtase"/>
</dbReference>
<dbReference type="InterPro" id="IPR036188">
    <property type="entry name" value="FAD/NAD-bd_sf"/>
</dbReference>
<dbReference type="NCBIfam" id="NF001933">
    <property type="entry name" value="PRK00711.1"/>
    <property type="match status" value="1"/>
</dbReference>
<dbReference type="PANTHER" id="PTHR13847:SF280">
    <property type="entry name" value="D-AMINO ACID DEHYDROGENASE"/>
    <property type="match status" value="1"/>
</dbReference>
<dbReference type="PANTHER" id="PTHR13847">
    <property type="entry name" value="SARCOSINE DEHYDROGENASE-RELATED"/>
    <property type="match status" value="1"/>
</dbReference>
<dbReference type="Pfam" id="PF01266">
    <property type="entry name" value="DAO"/>
    <property type="match status" value="1"/>
</dbReference>
<dbReference type="SUPFAM" id="SSF54373">
    <property type="entry name" value="FAD-linked reductases, C-terminal domain"/>
    <property type="match status" value="1"/>
</dbReference>
<dbReference type="SUPFAM" id="SSF51905">
    <property type="entry name" value="FAD/NAD(P)-binding domain"/>
    <property type="match status" value="1"/>
</dbReference>
<comment type="function">
    <text evidence="1">Oxidative deamination of D-amino acids.</text>
</comment>
<comment type="catalytic activity">
    <reaction evidence="1">
        <text>a D-alpha-amino acid + A + H2O = a 2-oxocarboxylate + AH2 + NH4(+)</text>
        <dbReference type="Rhea" id="RHEA:18125"/>
        <dbReference type="ChEBI" id="CHEBI:13193"/>
        <dbReference type="ChEBI" id="CHEBI:15377"/>
        <dbReference type="ChEBI" id="CHEBI:17499"/>
        <dbReference type="ChEBI" id="CHEBI:28938"/>
        <dbReference type="ChEBI" id="CHEBI:35179"/>
        <dbReference type="ChEBI" id="CHEBI:59871"/>
    </reaction>
</comment>
<comment type="cofactor">
    <cofactor evidence="1">
        <name>FAD</name>
        <dbReference type="ChEBI" id="CHEBI:57692"/>
    </cofactor>
</comment>
<comment type="pathway">
    <text>Amino-acid degradation; D-alanine degradation; NH(3) and pyruvate from D-alanine: step 1/1.</text>
</comment>
<comment type="similarity">
    <text evidence="1">Belongs to the DadA oxidoreductase family.</text>
</comment>
<protein>
    <recommendedName>
        <fullName evidence="1">D-amino acid dehydrogenase</fullName>
        <ecNumber evidence="1">1.4.99.-</ecNumber>
    </recommendedName>
</protein>
<reference key="1">
    <citation type="journal article" date="2008" name="Proc. Natl. Acad. Sci. U.S.A.">
        <title>Nitrogen fixation island and rhizosphere competence traits in the genome of root-associated Pseudomonas stutzeri A1501.</title>
        <authorList>
            <person name="Yan Y."/>
            <person name="Yang J."/>
            <person name="Dou Y."/>
            <person name="Chen M."/>
            <person name="Ping S."/>
            <person name="Peng J."/>
            <person name="Lu W."/>
            <person name="Zhang W."/>
            <person name="Yao Z."/>
            <person name="Li H."/>
            <person name="Liu W."/>
            <person name="He S."/>
            <person name="Geng L."/>
            <person name="Zhang X."/>
            <person name="Yang F."/>
            <person name="Yu H."/>
            <person name="Zhan Y."/>
            <person name="Li D."/>
            <person name="Lin Z."/>
            <person name="Wang Y."/>
            <person name="Elmerich C."/>
            <person name="Lin M."/>
            <person name="Jin Q."/>
        </authorList>
    </citation>
    <scope>NUCLEOTIDE SEQUENCE [LARGE SCALE GENOMIC DNA]</scope>
    <source>
        <strain>A1501</strain>
    </source>
</reference>
<accession>A4VGT8</accession>
<name>DADA_STUS1</name>
<proteinExistence type="inferred from homology"/>
<evidence type="ECO:0000255" key="1">
    <source>
        <dbReference type="HAMAP-Rule" id="MF_01202"/>
    </source>
</evidence>
<feature type="chain" id="PRO_1000066109" description="D-amino acid dehydrogenase">
    <location>
        <begin position="1"/>
        <end position="432"/>
    </location>
</feature>
<feature type="binding site" evidence="1">
    <location>
        <begin position="3"/>
        <end position="17"/>
    </location>
    <ligand>
        <name>FAD</name>
        <dbReference type="ChEBI" id="CHEBI:57692"/>
    </ligand>
</feature>
<gene>
    <name evidence="1" type="primary">dadA</name>
    <name type="ordered locus">PST_0483</name>
</gene>